<reference key="1">
    <citation type="journal article" date="2007" name="PLoS ONE">
        <title>Genome sequencing shows that European isolates of Francisella tularensis subspecies tularensis are almost identical to US laboratory strain Schu S4.</title>
        <authorList>
            <person name="Chaudhuri R.R."/>
            <person name="Ren C.-P."/>
            <person name="Desmond L."/>
            <person name="Vincent G.A."/>
            <person name="Silman N.J."/>
            <person name="Brehm J.K."/>
            <person name="Elmore M.J."/>
            <person name="Hudson M.J."/>
            <person name="Forsman M."/>
            <person name="Isherwood K.E."/>
            <person name="Gurycova D."/>
            <person name="Minton N.P."/>
            <person name="Titball R.W."/>
            <person name="Pallen M.J."/>
            <person name="Vipond R."/>
        </authorList>
    </citation>
    <scope>NUCLEOTIDE SEQUENCE [LARGE SCALE GENOMIC DNA]</scope>
    <source>
        <strain>FSC 198</strain>
    </source>
</reference>
<name>Y985_FRAT1</name>
<protein>
    <recommendedName>
        <fullName evidence="1">UPF0301 protein FTF0985</fullName>
    </recommendedName>
</protein>
<dbReference type="EMBL" id="AM286280">
    <property type="protein sequence ID" value="CAL09001.1"/>
    <property type="molecule type" value="Genomic_DNA"/>
</dbReference>
<dbReference type="RefSeq" id="WP_003021066.1">
    <property type="nucleotide sequence ID" value="NC_008245.1"/>
</dbReference>
<dbReference type="SMR" id="Q14HM1"/>
<dbReference type="KEGG" id="ftf:FTF0985"/>
<dbReference type="HOGENOM" id="CLU_057596_1_0_6"/>
<dbReference type="GO" id="GO:0005829">
    <property type="term" value="C:cytosol"/>
    <property type="evidence" value="ECO:0007669"/>
    <property type="project" value="TreeGrafter"/>
</dbReference>
<dbReference type="Gene3D" id="3.40.1740.10">
    <property type="entry name" value="VC0467-like"/>
    <property type="match status" value="1"/>
</dbReference>
<dbReference type="Gene3D" id="3.30.70.1300">
    <property type="entry name" value="VC0467-like domains"/>
    <property type="match status" value="1"/>
</dbReference>
<dbReference type="HAMAP" id="MF_00758">
    <property type="entry name" value="UPF0301"/>
    <property type="match status" value="1"/>
</dbReference>
<dbReference type="InterPro" id="IPR003774">
    <property type="entry name" value="AlgH-like"/>
</dbReference>
<dbReference type="PANTHER" id="PTHR30327">
    <property type="entry name" value="UNCHARACTERIZED PROTEIN YQGE"/>
    <property type="match status" value="1"/>
</dbReference>
<dbReference type="PANTHER" id="PTHR30327:SF1">
    <property type="entry name" value="UPF0301 PROTEIN YQGE"/>
    <property type="match status" value="1"/>
</dbReference>
<dbReference type="Pfam" id="PF02622">
    <property type="entry name" value="DUF179"/>
    <property type="match status" value="1"/>
</dbReference>
<dbReference type="SUPFAM" id="SSF143456">
    <property type="entry name" value="VC0467-like"/>
    <property type="match status" value="1"/>
</dbReference>
<feature type="chain" id="PRO_0000258828" description="UPF0301 protein FTF0985">
    <location>
        <begin position="1"/>
        <end position="194"/>
    </location>
</feature>
<gene>
    <name type="ordered locus">FTF0985</name>
</gene>
<comment type="similarity">
    <text evidence="1">Belongs to the UPF0301 (AlgH) family.</text>
</comment>
<evidence type="ECO:0000255" key="1">
    <source>
        <dbReference type="HAMAP-Rule" id="MF_00758"/>
    </source>
</evidence>
<accession>Q14HM1</accession>
<organism>
    <name type="scientific">Francisella tularensis subsp. tularensis (strain FSC 198)</name>
    <dbReference type="NCBI Taxonomy" id="393115"/>
    <lineage>
        <taxon>Bacteria</taxon>
        <taxon>Pseudomonadati</taxon>
        <taxon>Pseudomonadota</taxon>
        <taxon>Gammaproteobacteria</taxon>
        <taxon>Thiotrichales</taxon>
        <taxon>Francisellaceae</taxon>
        <taxon>Francisella</taxon>
    </lineage>
</organism>
<proteinExistence type="inferred from homology"/>
<sequence length="194" mass="22196">MYQNHKSEILLATPLIKDDIVFTKSVVYLCQNDRHGAMGLIINKPLADTLKDVFEELHIPHTNTFKEILEYPLYMGGPISPHKIMILHTTNGRNYTSTIKLDEGLAITASIDILEDIANNILPEYFLPVVGYSCWTANQLTDEIKSNDWIVTNKLNKKILFNHENKVKWQNHLEHAGYTLQSLDTLFNRNTGNC</sequence>